<accession>B7UNZ5</accession>
<gene>
    <name evidence="1" type="primary">rutA</name>
    <name type="ordered locus">E2348C_1063</name>
</gene>
<proteinExistence type="inferred from homology"/>
<dbReference type="EC" id="1.14.99.46" evidence="1"/>
<dbReference type="EMBL" id="FM180568">
    <property type="protein sequence ID" value="CAS08611.1"/>
    <property type="molecule type" value="Genomic_DNA"/>
</dbReference>
<dbReference type="RefSeq" id="WP_001340066.1">
    <property type="nucleotide sequence ID" value="NC_011601.1"/>
</dbReference>
<dbReference type="SMR" id="B7UNZ5"/>
<dbReference type="KEGG" id="ecg:E2348C_1063"/>
<dbReference type="HOGENOM" id="CLU_027853_1_1_6"/>
<dbReference type="Proteomes" id="UP000008205">
    <property type="component" value="Chromosome"/>
</dbReference>
<dbReference type="GO" id="GO:0008726">
    <property type="term" value="F:alkanesulfonate monooxygenase activity"/>
    <property type="evidence" value="ECO:0007669"/>
    <property type="project" value="TreeGrafter"/>
</dbReference>
<dbReference type="GO" id="GO:0052614">
    <property type="term" value="F:uracil oxygenase activity"/>
    <property type="evidence" value="ECO:0007669"/>
    <property type="project" value="UniProtKB-EC"/>
</dbReference>
<dbReference type="GO" id="GO:0046306">
    <property type="term" value="P:alkanesulfonate catabolic process"/>
    <property type="evidence" value="ECO:0007669"/>
    <property type="project" value="TreeGrafter"/>
</dbReference>
<dbReference type="GO" id="GO:0019740">
    <property type="term" value="P:nitrogen utilization"/>
    <property type="evidence" value="ECO:0007669"/>
    <property type="project" value="UniProtKB-UniRule"/>
</dbReference>
<dbReference type="GO" id="GO:0006212">
    <property type="term" value="P:uracil catabolic process"/>
    <property type="evidence" value="ECO:0007669"/>
    <property type="project" value="UniProtKB-UniRule"/>
</dbReference>
<dbReference type="CDD" id="cd01094">
    <property type="entry name" value="Alkanesulfonate_monoxygenase"/>
    <property type="match status" value="1"/>
</dbReference>
<dbReference type="FunFam" id="3.20.20.30:FF:000003">
    <property type="entry name" value="Pyrimidine monooxygenase RutA"/>
    <property type="match status" value="1"/>
</dbReference>
<dbReference type="Gene3D" id="3.20.20.30">
    <property type="entry name" value="Luciferase-like domain"/>
    <property type="match status" value="1"/>
</dbReference>
<dbReference type="HAMAP" id="MF_01699">
    <property type="entry name" value="RutA"/>
    <property type="match status" value="1"/>
</dbReference>
<dbReference type="InterPro" id="IPR011251">
    <property type="entry name" value="Luciferase-like_dom"/>
</dbReference>
<dbReference type="InterPro" id="IPR036661">
    <property type="entry name" value="Luciferase-like_sf"/>
</dbReference>
<dbReference type="InterPro" id="IPR019914">
    <property type="entry name" value="Pyrimidine_monooxygenase_RutA"/>
</dbReference>
<dbReference type="InterPro" id="IPR050172">
    <property type="entry name" value="SsuD_RutA_monooxygenase"/>
</dbReference>
<dbReference type="NCBIfam" id="TIGR03612">
    <property type="entry name" value="RutA"/>
    <property type="match status" value="1"/>
</dbReference>
<dbReference type="PANTHER" id="PTHR42847">
    <property type="entry name" value="ALKANESULFONATE MONOOXYGENASE"/>
    <property type="match status" value="1"/>
</dbReference>
<dbReference type="PANTHER" id="PTHR42847:SF4">
    <property type="entry name" value="ALKANESULFONATE MONOOXYGENASE-RELATED"/>
    <property type="match status" value="1"/>
</dbReference>
<dbReference type="Pfam" id="PF00296">
    <property type="entry name" value="Bac_luciferase"/>
    <property type="match status" value="1"/>
</dbReference>
<dbReference type="SUPFAM" id="SSF51679">
    <property type="entry name" value="Bacterial luciferase-like"/>
    <property type="match status" value="1"/>
</dbReference>
<sequence>MKIGVFVPIGNNGWLISTHAPQYMPTFELNKAIVQKAEHYHFDFALSMIKLRGFGGKTEFWDHNLESFTLMAGLAAVTSRIQIYATAATLTLPPAIVARMAATIDSISGGRFGVNLVTGWQKPEYEQMGIWPGDDYFSRRYDYLTEYVQVLRDLWGSGKSDFKGDFFTMDDCRVSPQPSVPMKVICAGQSDAGMAFSARYADFNFCFGKGVNTPTAFAPTAARMKQAAEQTGRDVGSYVLFMVIADETDDAARAKWEHYKAGADEEALSWLTEQSQKDTRSGTDTNVRQMADPTSAVNINMGTLVGSYASVARMLDEVASVPGAEGVLLTFDDFLSGIENFGERIQPLMQCRAHLPALTQEVA</sequence>
<protein>
    <recommendedName>
        <fullName evidence="1">Pyrimidine monooxygenase RutA</fullName>
        <ecNumber evidence="1">1.14.99.46</ecNumber>
    </recommendedName>
</protein>
<keyword id="KW-0285">Flavoprotein</keyword>
<keyword id="KW-0288">FMN</keyword>
<keyword id="KW-0503">Monooxygenase</keyword>
<keyword id="KW-0521">NADP</keyword>
<keyword id="KW-0560">Oxidoreductase</keyword>
<keyword id="KW-1185">Reference proteome</keyword>
<reference key="1">
    <citation type="journal article" date="2009" name="J. Bacteriol.">
        <title>Complete genome sequence and comparative genome analysis of enteropathogenic Escherichia coli O127:H6 strain E2348/69.</title>
        <authorList>
            <person name="Iguchi A."/>
            <person name="Thomson N.R."/>
            <person name="Ogura Y."/>
            <person name="Saunders D."/>
            <person name="Ooka T."/>
            <person name="Henderson I.R."/>
            <person name="Harris D."/>
            <person name="Asadulghani M."/>
            <person name="Kurokawa K."/>
            <person name="Dean P."/>
            <person name="Kenny B."/>
            <person name="Quail M.A."/>
            <person name="Thurston S."/>
            <person name="Dougan G."/>
            <person name="Hayashi T."/>
            <person name="Parkhill J."/>
            <person name="Frankel G."/>
        </authorList>
    </citation>
    <scope>NUCLEOTIDE SEQUENCE [LARGE SCALE GENOMIC DNA]</scope>
    <source>
        <strain>E2348/69 / EPEC</strain>
    </source>
</reference>
<name>RUTA_ECO27</name>
<feature type="chain" id="PRO_0000402606" description="Pyrimidine monooxygenase RutA">
    <location>
        <begin position="1"/>
        <end position="363"/>
    </location>
</feature>
<feature type="binding site" evidence="1">
    <location>
        <begin position="49"/>
        <end position="50"/>
    </location>
    <ligand>
        <name>FMN</name>
        <dbReference type="ChEBI" id="CHEBI:58210"/>
    </ligand>
</feature>
<feature type="binding site" evidence="1">
    <location>
        <position position="115"/>
    </location>
    <ligand>
        <name>FMN</name>
        <dbReference type="ChEBI" id="CHEBI:58210"/>
    </ligand>
</feature>
<feature type="binding site" evidence="1">
    <location>
        <position position="124"/>
    </location>
    <ligand>
        <name>FMN</name>
        <dbReference type="ChEBI" id="CHEBI:58210"/>
    </ligand>
</feature>
<feature type="binding site" evidence="1">
    <location>
        <begin position="140"/>
        <end position="141"/>
    </location>
    <ligand>
        <name>FMN</name>
        <dbReference type="ChEBI" id="CHEBI:58210"/>
    </ligand>
</feature>
<feature type="binding site" evidence="1">
    <location>
        <position position="190"/>
    </location>
    <ligand>
        <name>FMN</name>
        <dbReference type="ChEBI" id="CHEBI:58210"/>
    </ligand>
</feature>
<comment type="function">
    <text evidence="1">Catalyzes the pyrimidine ring opening between N-3 and C-4 by an unusual flavin hydroperoxide-catalyzed mechanism, adding oxygen atoms in the process to yield ureidoacrylate peracid, that immediately reacts with FMN forming ureidoacrylate and FMN-N(5)-oxide. The FMN-N(5)-oxide reacts spontaneously with NADH to produce FMN. Requires the flavin reductase RutF to regenerate FMN in vivo.</text>
</comment>
<comment type="catalytic activity">
    <reaction evidence="1">
        <text>uracil + FMNH2 + NADH + O2 = (Z)-3-ureidoacrylate + FMN + NAD(+) + H2O + H(+)</text>
        <dbReference type="Rhea" id="RHEA:31587"/>
        <dbReference type="ChEBI" id="CHEBI:15377"/>
        <dbReference type="ChEBI" id="CHEBI:15378"/>
        <dbReference type="ChEBI" id="CHEBI:15379"/>
        <dbReference type="ChEBI" id="CHEBI:17568"/>
        <dbReference type="ChEBI" id="CHEBI:57540"/>
        <dbReference type="ChEBI" id="CHEBI:57618"/>
        <dbReference type="ChEBI" id="CHEBI:57945"/>
        <dbReference type="ChEBI" id="CHEBI:58210"/>
        <dbReference type="ChEBI" id="CHEBI:59891"/>
        <dbReference type="EC" id="1.14.99.46"/>
    </reaction>
</comment>
<comment type="catalytic activity">
    <reaction evidence="1">
        <text>thymine + FMNH2 + NADH + O2 = (Z)-2-methylureidoacrylate + FMN + NAD(+) + H2O + H(+)</text>
        <dbReference type="Rhea" id="RHEA:31599"/>
        <dbReference type="ChEBI" id="CHEBI:15377"/>
        <dbReference type="ChEBI" id="CHEBI:15378"/>
        <dbReference type="ChEBI" id="CHEBI:15379"/>
        <dbReference type="ChEBI" id="CHEBI:17821"/>
        <dbReference type="ChEBI" id="CHEBI:57540"/>
        <dbReference type="ChEBI" id="CHEBI:57618"/>
        <dbReference type="ChEBI" id="CHEBI:57945"/>
        <dbReference type="ChEBI" id="CHEBI:58210"/>
        <dbReference type="ChEBI" id="CHEBI:143783"/>
        <dbReference type="EC" id="1.14.99.46"/>
    </reaction>
</comment>
<comment type="induction">
    <text evidence="1">Up-regulated by the nitrogen regulatory protein C (NtrC also called GlnG) and repressed by RutR.</text>
</comment>
<comment type="similarity">
    <text evidence="1">Belongs to the NtaA/SnaA/DszA monooxygenase family. RutA subfamily.</text>
</comment>
<organism>
    <name type="scientific">Escherichia coli O127:H6 (strain E2348/69 / EPEC)</name>
    <dbReference type="NCBI Taxonomy" id="574521"/>
    <lineage>
        <taxon>Bacteria</taxon>
        <taxon>Pseudomonadati</taxon>
        <taxon>Pseudomonadota</taxon>
        <taxon>Gammaproteobacteria</taxon>
        <taxon>Enterobacterales</taxon>
        <taxon>Enterobacteriaceae</taxon>
        <taxon>Escherichia</taxon>
    </lineage>
</organism>
<evidence type="ECO:0000255" key="1">
    <source>
        <dbReference type="HAMAP-Rule" id="MF_01699"/>
    </source>
</evidence>